<proteinExistence type="evidence at protein level"/>
<reference evidence="6" key="1">
    <citation type="journal article" date="1998" name="Science">
        <title>Genome sequence of the nematode C. elegans: a platform for investigating biology.</title>
        <authorList>
            <consortium name="The C. elegans sequencing consortium"/>
        </authorList>
    </citation>
    <scope>NUCLEOTIDE SEQUENCE [LARGE SCALE GENOMIC DNA]</scope>
    <source>
        <strain evidence="6">Bristol N2</strain>
    </source>
</reference>
<reference evidence="5" key="2">
    <citation type="journal article" date="2019" name="Dev. Cell">
        <title>CEH-60/PBX and UNC-62/MEIS Coordinate a Metabolic Switch that Supports Reproduction in C. elegans.</title>
        <authorList>
            <person name="Dowen R.H."/>
        </authorList>
    </citation>
    <scope>FUNCTION</scope>
    <scope>INTERACTION WITH UNC-62; PQM-1</scope>
    <scope>SUBCELLULAR LOCATION</scope>
    <scope>DEVELOPMENTAL STAGE</scope>
    <scope>DISRUPTION PHENOTYPE</scope>
</reference>
<reference evidence="5" key="3">
    <citation type="journal article" date="2019" name="PLoS Biol.">
        <title>CEH-60/PBX regulates vitellogenesis and cuticle permeability through intestinal interaction with UNC-62/MEIS in Caenorhabditis elegans.</title>
        <authorList>
            <person name="Van de Walle P."/>
            <person name="Geens E."/>
            <person name="Baggerman G."/>
            <person name="Jose Naranjo-Galindo F."/>
            <person name="Askjaer P."/>
            <person name="Schoofs L."/>
            <person name="Temmerman L."/>
        </authorList>
    </citation>
    <scope>FUNCTION</scope>
    <scope>INTERACTION WITH UNC-62</scope>
    <scope>DEVELOPMENTAL STAGE</scope>
    <scope>MUTAGENESIS OF 241-GLN--GLY-360</scope>
</reference>
<name>CEH60_CAEEL</name>
<evidence type="ECO:0000255" key="1">
    <source>
        <dbReference type="PROSITE-ProRule" id="PRU00108"/>
    </source>
</evidence>
<evidence type="ECO:0000255" key="2">
    <source>
        <dbReference type="PROSITE-ProRule" id="PRU01322"/>
    </source>
</evidence>
<evidence type="ECO:0000269" key="3">
    <source>
    </source>
</evidence>
<evidence type="ECO:0000269" key="4">
    <source>
    </source>
</evidence>
<evidence type="ECO:0000305" key="5"/>
<evidence type="ECO:0000312" key="6">
    <source>
        <dbReference type="Proteomes" id="UP000001940"/>
    </source>
</evidence>
<evidence type="ECO:0000312" key="7">
    <source>
        <dbReference type="WormBase" id="F22A3.5"/>
    </source>
</evidence>
<keyword id="KW-0238">DNA-binding</keyword>
<keyword id="KW-0371">Homeobox</keyword>
<keyword id="KW-0539">Nucleus</keyword>
<keyword id="KW-1185">Reference proteome</keyword>
<keyword id="KW-0804">Transcription</keyword>
<keyword id="KW-0805">Transcription regulation</keyword>
<protein>
    <recommendedName>
        <fullName evidence="5">Homeobox protein ceh-60</fullName>
    </recommendedName>
</protein>
<feature type="chain" id="PRO_0000452276" description="Homeobox protein ceh-60">
    <location>
        <begin position="1"/>
        <end position="360"/>
    </location>
</feature>
<feature type="domain" description="PBC" evidence="2">
    <location>
        <begin position="1"/>
        <end position="179"/>
    </location>
</feature>
<feature type="DNA-binding region" description="Homeobox" evidence="1">
    <location>
        <begin position="180"/>
        <end position="242"/>
    </location>
</feature>
<feature type="region of interest" description="PBC-A" evidence="2">
    <location>
        <begin position="1"/>
        <end position="82"/>
    </location>
</feature>
<feature type="region of interest" description="PBC-B" evidence="2">
    <location>
        <begin position="85"/>
        <end position="179"/>
    </location>
</feature>
<feature type="mutagenesis site" description="In lst466; increased accumulation of intestinal fat in adults. Significant reduction in cuticle permeability." evidence="4">
    <location>
        <begin position="241"/>
        <end position="360"/>
    </location>
</feature>
<gene>
    <name evidence="7" type="primary">ceh-60</name>
    <name evidence="7" type="ORF">F22A3.5</name>
</gene>
<sequence>MDNLIKQLQMSVSSENVDRNFIEKCIEMNPCRRMLHEVLLERKDILRSRMNLVALYDTDEQSSEIEEILAQFENPTFPLEEVNTEKDEEWQPLERKYLDGINRIKEDTIMKQIQLDKDMEKALTNSEEVLRNHRDFRPIDEKDFSNIRQSISKRFEHSKNNIRGEAATKILVLRREIEQQGRKRRNFDKNTTDILQNWFHDHRQNPYPSDQEKAELAKQCNIKISQVNNWFGNQRIRTKQQALRMQEDERERAASMANEAQAIQNSLNSSTVASSSNMSTSGLINIPLVNPTMQSMVIPAVQPGLLGNPNAFLHQPHYFTAGGQMSLNDNGNGQQFFTDYETFGLAQSDTESFNQMGYLG</sequence>
<accession>Q45EK2</accession>
<comment type="function">
    <text evidence="3 4">Probable transcription regulator which binds to DNA, repressing genes involved in longevity and stress, while activating genes involved in reproduction, such as the vitellogenins (PubMed:30956009, PubMed:31675356). Associates with homeobox unc-62 to regulate gene expression, including repression of genes involved in innate immunity (PubMed:30956009, PubMed:31675356). Required for intestinal expression of vitellogenin genes (PubMed:30956009, PubMed:31675356). Negatively modulates longevity, probably independently of effects on vitellogenesis (PubMed:30956009). Involved in lipid homeostasis, contributing to the reallocation of intestinal lipids to the germline and to the formation of the cuticle (PubMed:30956009, PubMed:31675356). Associates with transcriptional regulator pqm-1 at the daf-16 associated element within the promoters of stress-responsive genes to regulate expression (PubMed:30956009).</text>
</comment>
<comment type="subunit">
    <text evidence="3 4">Forms a heterodimer with homeobox unc-62 (PubMed:30956009, PubMed:31675356). Interacts with pqm-1 (PubMed:30956009).</text>
</comment>
<comment type="subcellular location">
    <subcellularLocation>
        <location evidence="1 3">Nucleus</location>
    </subcellularLocation>
    <text evidence="3">Localizes to the nucleus in an unc-62-dependent manner.</text>
</comment>
<comment type="developmental stage">
    <text evidence="3 4">Expressed in the intestine at the L4 larval stage and persists into adulthood (PubMed:30956009, PubMed:31675356). Expressed in sensory AWC neurons, pharyngeal muscle cells pm6, and intestine, in the adult (PubMed:30956009, PubMed:31675356).</text>
</comment>
<comment type="disruption phenotype">
    <text evidence="3">RNAi mediated knockdown targeted to the intestine represses expression of vitellogenin genes.</text>
</comment>
<comment type="similarity">
    <text evidence="5">Belongs to the TALE/PBX homeobox family.</text>
</comment>
<dbReference type="EMBL" id="BX284606">
    <property type="protein sequence ID" value="CCD64582.2"/>
    <property type="molecule type" value="Genomic_DNA"/>
</dbReference>
<dbReference type="RefSeq" id="NP_509101.4">
    <property type="nucleotide sequence ID" value="NM_076700.6"/>
</dbReference>
<dbReference type="SMR" id="Q45EK2"/>
<dbReference type="FunCoup" id="Q45EK2">
    <property type="interactions" value="3"/>
</dbReference>
<dbReference type="IntAct" id="Q45EK2">
    <property type="interactions" value="2"/>
</dbReference>
<dbReference type="STRING" id="6239.F22A3.5.1"/>
<dbReference type="PaxDb" id="6239-F22A3.5"/>
<dbReference type="PeptideAtlas" id="Q45EK2"/>
<dbReference type="EnsemblMetazoa" id="F22A3.5.1">
    <property type="protein sequence ID" value="F22A3.5.1"/>
    <property type="gene ID" value="WBGene00017690"/>
</dbReference>
<dbReference type="GeneID" id="184803"/>
<dbReference type="KEGG" id="cel:CELE_F22A3.5"/>
<dbReference type="UCSC" id="F22A3.5">
    <property type="organism name" value="c. elegans"/>
</dbReference>
<dbReference type="AGR" id="WB:WBGene00017690"/>
<dbReference type="CTD" id="184803"/>
<dbReference type="WormBase" id="F22A3.5">
    <property type="protein sequence ID" value="CE47258"/>
    <property type="gene ID" value="WBGene00017690"/>
    <property type="gene designation" value="ceh-60"/>
</dbReference>
<dbReference type="eggNOG" id="KOG0774">
    <property type="taxonomic scope" value="Eukaryota"/>
</dbReference>
<dbReference type="GeneTree" id="ENSGT00940000169683"/>
<dbReference type="HOGENOM" id="CLU_769949_0_0_1"/>
<dbReference type="InParanoid" id="Q45EK2"/>
<dbReference type="OMA" id="AKQCNIK"/>
<dbReference type="OrthoDB" id="4187154at2759"/>
<dbReference type="PhylomeDB" id="Q45EK2"/>
<dbReference type="Reactome" id="R-CEL-2173795">
    <property type="pathway name" value="Downregulation of SMAD2/3:SMAD4 transcriptional activity"/>
</dbReference>
<dbReference type="PRO" id="PR:Q45EK2"/>
<dbReference type="Proteomes" id="UP000001940">
    <property type="component" value="Chromosome X"/>
</dbReference>
<dbReference type="Bgee" id="WBGene00017690">
    <property type="expression patterns" value="Expressed in material anatomical entity and 4 other cell types or tissues"/>
</dbReference>
<dbReference type="GO" id="GO:0000785">
    <property type="term" value="C:chromatin"/>
    <property type="evidence" value="ECO:0000314"/>
    <property type="project" value="UniProtKB"/>
</dbReference>
<dbReference type="GO" id="GO:0005634">
    <property type="term" value="C:nucleus"/>
    <property type="evidence" value="ECO:0007669"/>
    <property type="project" value="UniProtKB-SubCell"/>
</dbReference>
<dbReference type="GO" id="GO:0000981">
    <property type="term" value="F:DNA-binding transcription factor activity, RNA polymerase II-specific"/>
    <property type="evidence" value="ECO:0007669"/>
    <property type="project" value="InterPro"/>
</dbReference>
<dbReference type="GO" id="GO:0000978">
    <property type="term" value="F:RNA polymerase II cis-regulatory region sequence-specific DNA binding"/>
    <property type="evidence" value="ECO:0000315"/>
    <property type="project" value="UniProtKB"/>
</dbReference>
<dbReference type="GO" id="GO:0071542">
    <property type="term" value="P:dopaminergic neuron differentiation"/>
    <property type="evidence" value="ECO:0000316"/>
    <property type="project" value="UniProtKB"/>
</dbReference>
<dbReference type="GO" id="GO:0055088">
    <property type="term" value="P:lipid homeostasis"/>
    <property type="evidence" value="ECO:0000315"/>
    <property type="project" value="UniProtKB"/>
</dbReference>
<dbReference type="GO" id="GO:0006357">
    <property type="term" value="P:regulation of transcription by RNA polymerase II"/>
    <property type="evidence" value="ECO:0000315"/>
    <property type="project" value="UniProtKB"/>
</dbReference>
<dbReference type="CDD" id="cd00086">
    <property type="entry name" value="homeodomain"/>
    <property type="match status" value="1"/>
</dbReference>
<dbReference type="Gene3D" id="1.10.10.60">
    <property type="entry name" value="Homeodomain-like"/>
    <property type="match status" value="1"/>
</dbReference>
<dbReference type="InterPro" id="IPR001356">
    <property type="entry name" value="HD"/>
</dbReference>
<dbReference type="InterPro" id="IPR017970">
    <property type="entry name" value="Homeobox_CS"/>
</dbReference>
<dbReference type="InterPro" id="IPR009057">
    <property type="entry name" value="Homeodomain-like_sf"/>
</dbReference>
<dbReference type="InterPro" id="IPR008422">
    <property type="entry name" value="KN_HD"/>
</dbReference>
<dbReference type="InterPro" id="IPR005542">
    <property type="entry name" value="PBX_PBC_dom"/>
</dbReference>
<dbReference type="InterPro" id="IPR050224">
    <property type="entry name" value="TALE_homeobox"/>
</dbReference>
<dbReference type="PANTHER" id="PTHR11850">
    <property type="entry name" value="HOMEOBOX PROTEIN TRANSCRIPTION FACTORS"/>
    <property type="match status" value="1"/>
</dbReference>
<dbReference type="Pfam" id="PF05920">
    <property type="entry name" value="Homeobox_KN"/>
    <property type="match status" value="1"/>
</dbReference>
<dbReference type="Pfam" id="PF03792">
    <property type="entry name" value="PBC"/>
    <property type="match status" value="1"/>
</dbReference>
<dbReference type="SMART" id="SM00389">
    <property type="entry name" value="HOX"/>
    <property type="match status" value="1"/>
</dbReference>
<dbReference type="SUPFAM" id="SSF46689">
    <property type="entry name" value="Homeodomain-like"/>
    <property type="match status" value="1"/>
</dbReference>
<dbReference type="PROSITE" id="PS00027">
    <property type="entry name" value="HOMEOBOX_1"/>
    <property type="match status" value="1"/>
</dbReference>
<dbReference type="PROSITE" id="PS50071">
    <property type="entry name" value="HOMEOBOX_2"/>
    <property type="match status" value="1"/>
</dbReference>
<dbReference type="PROSITE" id="PS51978">
    <property type="entry name" value="PBC"/>
    <property type="match status" value="1"/>
</dbReference>
<organism evidence="6">
    <name type="scientific">Caenorhabditis elegans</name>
    <dbReference type="NCBI Taxonomy" id="6239"/>
    <lineage>
        <taxon>Eukaryota</taxon>
        <taxon>Metazoa</taxon>
        <taxon>Ecdysozoa</taxon>
        <taxon>Nematoda</taxon>
        <taxon>Chromadorea</taxon>
        <taxon>Rhabditida</taxon>
        <taxon>Rhabditina</taxon>
        <taxon>Rhabditomorpha</taxon>
        <taxon>Rhabditoidea</taxon>
        <taxon>Rhabditidae</taxon>
        <taxon>Peloderinae</taxon>
        <taxon>Caenorhabditis</taxon>
    </lineage>
</organism>